<feature type="chain" id="PRO_0000061340" description="Cytochrome b">
    <location>
        <begin position="1"/>
        <end position="379"/>
    </location>
</feature>
<feature type="transmembrane region" description="Helical" evidence="2">
    <location>
        <begin position="33"/>
        <end position="53"/>
    </location>
</feature>
<feature type="transmembrane region" description="Helical" evidence="2">
    <location>
        <begin position="77"/>
        <end position="98"/>
    </location>
</feature>
<feature type="transmembrane region" description="Helical" evidence="2">
    <location>
        <begin position="113"/>
        <end position="133"/>
    </location>
</feature>
<feature type="transmembrane region" description="Helical" evidence="2">
    <location>
        <begin position="178"/>
        <end position="198"/>
    </location>
</feature>
<feature type="transmembrane region" description="Helical" evidence="2">
    <location>
        <begin position="226"/>
        <end position="246"/>
    </location>
</feature>
<feature type="transmembrane region" description="Helical" evidence="2">
    <location>
        <begin position="288"/>
        <end position="308"/>
    </location>
</feature>
<feature type="transmembrane region" description="Helical" evidence="2">
    <location>
        <begin position="320"/>
        <end position="340"/>
    </location>
</feature>
<feature type="transmembrane region" description="Helical" evidence="2">
    <location>
        <begin position="347"/>
        <end position="367"/>
    </location>
</feature>
<feature type="binding site" description="axial binding residue" evidence="2">
    <location>
        <position position="83"/>
    </location>
    <ligand>
        <name>heme b</name>
        <dbReference type="ChEBI" id="CHEBI:60344"/>
        <label>b562</label>
    </ligand>
    <ligandPart>
        <name>Fe</name>
        <dbReference type="ChEBI" id="CHEBI:18248"/>
    </ligandPart>
</feature>
<feature type="binding site" description="axial binding residue" evidence="2">
    <location>
        <position position="97"/>
    </location>
    <ligand>
        <name>heme b</name>
        <dbReference type="ChEBI" id="CHEBI:60344"/>
        <label>b566</label>
    </ligand>
    <ligandPart>
        <name>Fe</name>
        <dbReference type="ChEBI" id="CHEBI:18248"/>
    </ligandPart>
</feature>
<feature type="binding site" description="axial binding residue" evidence="2">
    <location>
        <position position="182"/>
    </location>
    <ligand>
        <name>heme b</name>
        <dbReference type="ChEBI" id="CHEBI:60344"/>
        <label>b562</label>
    </ligand>
    <ligandPart>
        <name>Fe</name>
        <dbReference type="ChEBI" id="CHEBI:18248"/>
    </ligandPart>
</feature>
<feature type="binding site" description="axial binding residue" evidence="2">
    <location>
        <position position="196"/>
    </location>
    <ligand>
        <name>heme b</name>
        <dbReference type="ChEBI" id="CHEBI:60344"/>
        <label>b566</label>
    </ligand>
    <ligandPart>
        <name>Fe</name>
        <dbReference type="ChEBI" id="CHEBI:18248"/>
    </ligandPart>
</feature>
<feature type="binding site" evidence="2">
    <location>
        <position position="201"/>
    </location>
    <ligand>
        <name>a ubiquinone</name>
        <dbReference type="ChEBI" id="CHEBI:16389"/>
    </ligand>
</feature>
<gene>
    <name type="primary">MT-CYB</name>
    <name type="synonym">COB</name>
    <name type="synonym">CYTB</name>
    <name type="synonym">MTCYB</name>
</gene>
<geneLocation type="mitochondrion"/>
<reference key="1">
    <citation type="journal article" date="1995" name="J. Mol. Evol.">
        <title>A molecular view of pinniped relationships with particular emphasis on the true seals.</title>
        <authorList>
            <person name="Arnason U."/>
            <person name="Bodin K."/>
            <person name="Gullberg A."/>
            <person name="Ledje C."/>
            <person name="Mouchaty S."/>
        </authorList>
    </citation>
    <scope>NUCLEOTIDE SEQUENCE [GENOMIC DNA]</scope>
</reference>
<protein>
    <recommendedName>
        <fullName>Cytochrome b</fullName>
    </recommendedName>
    <alternativeName>
        <fullName>Complex III subunit 3</fullName>
    </alternativeName>
    <alternativeName>
        <fullName>Complex III subunit III</fullName>
    </alternativeName>
    <alternativeName>
        <fullName>Cytochrome b-c1 complex subunit 3</fullName>
    </alternativeName>
    <alternativeName>
        <fullName>Ubiquinol-cytochrome-c reductase complex cytochrome b subunit</fullName>
    </alternativeName>
</protein>
<name>CYB_PANLE</name>
<proteinExistence type="inferred from homology"/>
<sequence length="379" mass="42622">MTNIRKSHPLVKIINHSFIDLPTPPNISAWWNFGSLLGVCLILQILTGLFLAMHYTPDTMTAFSSVTHICRDVNYGWIIRYLHANGASMFFICLYMHVGRGMYYGSYTFSETWNIGIVLLFTVMATAFMGYVLPWGQMSFWGATVITNLLSAIPYIGADLVEWIWGGFSVDKATLTRFFAFHFILPFIISALAAVHLLFLHETGSNNPSGMVSDSDKIPFHPYYTIKDILGLLVLILTLMLLVLFSPDLLGDPDNYTPANPLSTPPHIKPEWYFLFAYAILRSIPNKLGGVLALVLSILILAIIPALHTSKQRGLMFRPLSQCLFWFLVADLLTLTWIGGQPVEHPFITIGQLASILYFSILLILMPISGIIENRLLKW</sequence>
<dbReference type="EMBL" id="X82300">
    <property type="protein sequence ID" value="CAA57743.1"/>
    <property type="molecule type" value="Genomic_DNA"/>
</dbReference>
<dbReference type="PIR" id="S58451">
    <property type="entry name" value="S58451"/>
</dbReference>
<dbReference type="RefSeq" id="YP_009178319.1">
    <property type="nucleotide sequence ID" value="NC_028302.1"/>
</dbReference>
<dbReference type="SMR" id="Q35506"/>
<dbReference type="GeneID" id="26129539"/>
<dbReference type="KEGG" id="plez:26129539"/>
<dbReference type="CTD" id="4519"/>
<dbReference type="OrthoDB" id="15293at33554"/>
<dbReference type="Proteomes" id="UP000694399">
    <property type="component" value="Unplaced"/>
</dbReference>
<dbReference type="GO" id="GO:0005743">
    <property type="term" value="C:mitochondrial inner membrane"/>
    <property type="evidence" value="ECO:0007669"/>
    <property type="project" value="UniProtKB-SubCell"/>
</dbReference>
<dbReference type="GO" id="GO:0045275">
    <property type="term" value="C:respiratory chain complex III"/>
    <property type="evidence" value="ECO:0007669"/>
    <property type="project" value="InterPro"/>
</dbReference>
<dbReference type="GO" id="GO:0046872">
    <property type="term" value="F:metal ion binding"/>
    <property type="evidence" value="ECO:0007669"/>
    <property type="project" value="UniProtKB-KW"/>
</dbReference>
<dbReference type="GO" id="GO:0008121">
    <property type="term" value="F:ubiquinol-cytochrome-c reductase activity"/>
    <property type="evidence" value="ECO:0007669"/>
    <property type="project" value="InterPro"/>
</dbReference>
<dbReference type="GO" id="GO:0006122">
    <property type="term" value="P:mitochondrial electron transport, ubiquinol to cytochrome c"/>
    <property type="evidence" value="ECO:0007669"/>
    <property type="project" value="TreeGrafter"/>
</dbReference>
<dbReference type="CDD" id="cd00290">
    <property type="entry name" value="cytochrome_b_C"/>
    <property type="match status" value="1"/>
</dbReference>
<dbReference type="CDD" id="cd00284">
    <property type="entry name" value="Cytochrome_b_N"/>
    <property type="match status" value="1"/>
</dbReference>
<dbReference type="FunFam" id="1.20.810.10:FF:000002">
    <property type="entry name" value="Cytochrome b"/>
    <property type="match status" value="1"/>
</dbReference>
<dbReference type="Gene3D" id="1.20.810.10">
    <property type="entry name" value="Cytochrome Bc1 Complex, Chain C"/>
    <property type="match status" value="1"/>
</dbReference>
<dbReference type="InterPro" id="IPR005798">
    <property type="entry name" value="Cyt_b/b6_C"/>
</dbReference>
<dbReference type="InterPro" id="IPR036150">
    <property type="entry name" value="Cyt_b/b6_C_sf"/>
</dbReference>
<dbReference type="InterPro" id="IPR005797">
    <property type="entry name" value="Cyt_b/b6_N"/>
</dbReference>
<dbReference type="InterPro" id="IPR027387">
    <property type="entry name" value="Cytb/b6-like_sf"/>
</dbReference>
<dbReference type="InterPro" id="IPR030689">
    <property type="entry name" value="Cytochrome_b"/>
</dbReference>
<dbReference type="InterPro" id="IPR048260">
    <property type="entry name" value="Cytochrome_b_C_euk/bac"/>
</dbReference>
<dbReference type="InterPro" id="IPR048259">
    <property type="entry name" value="Cytochrome_b_N_euk/bac"/>
</dbReference>
<dbReference type="InterPro" id="IPR016174">
    <property type="entry name" value="Di-haem_cyt_TM"/>
</dbReference>
<dbReference type="PANTHER" id="PTHR19271">
    <property type="entry name" value="CYTOCHROME B"/>
    <property type="match status" value="1"/>
</dbReference>
<dbReference type="PANTHER" id="PTHR19271:SF16">
    <property type="entry name" value="CYTOCHROME B"/>
    <property type="match status" value="1"/>
</dbReference>
<dbReference type="Pfam" id="PF00032">
    <property type="entry name" value="Cytochrom_B_C"/>
    <property type="match status" value="1"/>
</dbReference>
<dbReference type="Pfam" id="PF00033">
    <property type="entry name" value="Cytochrome_B"/>
    <property type="match status" value="1"/>
</dbReference>
<dbReference type="PIRSF" id="PIRSF038885">
    <property type="entry name" value="COB"/>
    <property type="match status" value="1"/>
</dbReference>
<dbReference type="SUPFAM" id="SSF81648">
    <property type="entry name" value="a domain/subunit of cytochrome bc1 complex (Ubiquinol-cytochrome c reductase)"/>
    <property type="match status" value="1"/>
</dbReference>
<dbReference type="SUPFAM" id="SSF81342">
    <property type="entry name" value="Transmembrane di-heme cytochromes"/>
    <property type="match status" value="1"/>
</dbReference>
<dbReference type="PROSITE" id="PS51003">
    <property type="entry name" value="CYTB_CTER"/>
    <property type="match status" value="1"/>
</dbReference>
<dbReference type="PROSITE" id="PS51002">
    <property type="entry name" value="CYTB_NTER"/>
    <property type="match status" value="1"/>
</dbReference>
<organism>
    <name type="scientific">Panthera leo</name>
    <name type="common">Lion</name>
    <dbReference type="NCBI Taxonomy" id="9689"/>
    <lineage>
        <taxon>Eukaryota</taxon>
        <taxon>Metazoa</taxon>
        <taxon>Chordata</taxon>
        <taxon>Craniata</taxon>
        <taxon>Vertebrata</taxon>
        <taxon>Euteleostomi</taxon>
        <taxon>Mammalia</taxon>
        <taxon>Eutheria</taxon>
        <taxon>Laurasiatheria</taxon>
        <taxon>Carnivora</taxon>
        <taxon>Feliformia</taxon>
        <taxon>Felidae</taxon>
        <taxon>Pantherinae</taxon>
        <taxon>Panthera</taxon>
    </lineage>
</organism>
<keyword id="KW-0249">Electron transport</keyword>
<keyword id="KW-0349">Heme</keyword>
<keyword id="KW-0408">Iron</keyword>
<keyword id="KW-0472">Membrane</keyword>
<keyword id="KW-0479">Metal-binding</keyword>
<keyword id="KW-0496">Mitochondrion</keyword>
<keyword id="KW-0999">Mitochondrion inner membrane</keyword>
<keyword id="KW-1185">Reference proteome</keyword>
<keyword id="KW-0679">Respiratory chain</keyword>
<keyword id="KW-0812">Transmembrane</keyword>
<keyword id="KW-1133">Transmembrane helix</keyword>
<keyword id="KW-0813">Transport</keyword>
<keyword id="KW-0830">Ubiquinone</keyword>
<comment type="function">
    <text evidence="2">Component of the ubiquinol-cytochrome c reductase complex (complex III or cytochrome b-c1 complex) that is part of the mitochondrial respiratory chain. The b-c1 complex mediates electron transfer from ubiquinol to cytochrome c. Contributes to the generation of a proton gradient across the mitochondrial membrane that is then used for ATP synthesis.</text>
</comment>
<comment type="cofactor">
    <cofactor evidence="2">
        <name>heme b</name>
        <dbReference type="ChEBI" id="CHEBI:60344"/>
    </cofactor>
    <text evidence="2">Binds 2 heme b groups non-covalently.</text>
</comment>
<comment type="subunit">
    <text evidence="2">The cytochrome bc1 complex contains 11 subunits: 3 respiratory subunits (MT-CYB, CYC1 and UQCRFS1), 2 core proteins (UQCRC1 and UQCRC2) and 6 low-molecular weight proteins (UQCRH/QCR6, UQCRB/QCR7, UQCRQ/QCR8, UQCR10/QCR9, UQCR11/QCR10 and a cleavage product of UQCRFS1). This cytochrome bc1 complex then forms a dimer.</text>
</comment>
<comment type="subcellular location">
    <subcellularLocation>
        <location evidence="2">Mitochondrion inner membrane</location>
        <topology evidence="2">Multi-pass membrane protein</topology>
    </subcellularLocation>
</comment>
<comment type="miscellaneous">
    <text evidence="1">Heme 1 (or BL or b562) is low-potential and absorbs at about 562 nm, and heme 2 (or BH or b566) is high-potential and absorbs at about 566 nm.</text>
</comment>
<comment type="similarity">
    <text evidence="3 4">Belongs to the cytochrome b family.</text>
</comment>
<comment type="caution">
    <text evidence="2">The full-length protein contains only eight transmembrane helices, not nine as predicted by bioinformatics tools.</text>
</comment>
<evidence type="ECO:0000250" key="1"/>
<evidence type="ECO:0000250" key="2">
    <source>
        <dbReference type="UniProtKB" id="P00157"/>
    </source>
</evidence>
<evidence type="ECO:0000255" key="3">
    <source>
        <dbReference type="PROSITE-ProRule" id="PRU00967"/>
    </source>
</evidence>
<evidence type="ECO:0000255" key="4">
    <source>
        <dbReference type="PROSITE-ProRule" id="PRU00968"/>
    </source>
</evidence>
<accession>Q35506</accession>